<reference key="1">
    <citation type="journal article" date="2008" name="BMC Genomics">
        <title>The genome sequence of the fish pathogen Aliivibrio salmonicida strain LFI1238 shows extensive evidence of gene decay.</title>
        <authorList>
            <person name="Hjerde E."/>
            <person name="Lorentzen M.S."/>
            <person name="Holden M.T."/>
            <person name="Seeger K."/>
            <person name="Paulsen S."/>
            <person name="Bason N."/>
            <person name="Churcher C."/>
            <person name="Harris D."/>
            <person name="Norbertczak H."/>
            <person name="Quail M.A."/>
            <person name="Sanders S."/>
            <person name="Thurston S."/>
            <person name="Parkhill J."/>
            <person name="Willassen N.P."/>
            <person name="Thomson N.R."/>
        </authorList>
    </citation>
    <scope>NUCLEOTIDE SEQUENCE [LARGE SCALE GENOMIC DNA]</scope>
    <source>
        <strain>LFI1238</strain>
    </source>
</reference>
<proteinExistence type="inferred from homology"/>
<name>YQGF_ALISL</name>
<gene>
    <name type="ordered locus">VSAL_I0546</name>
</gene>
<sequence>MSSRTIMAFDFGTKSIGSAIGQEITGTASPLKAFKAQDGTPNWDDIEKQIKEWQPDLIVVGLPTDLHGKELDVITPKAKKFANRLHGRFGNQVELHDERLSTVEARADLFEFGGYKALSKGNVDCQSAVVILESWFESQWG</sequence>
<comment type="function">
    <text evidence="1">Could be a nuclease involved in processing of the 5'-end of pre-16S rRNA.</text>
</comment>
<comment type="subcellular location">
    <subcellularLocation>
        <location evidence="1">Cytoplasm</location>
    </subcellularLocation>
</comment>
<comment type="similarity">
    <text evidence="1">Belongs to the YqgF nuclease family.</text>
</comment>
<evidence type="ECO:0000255" key="1">
    <source>
        <dbReference type="HAMAP-Rule" id="MF_00651"/>
    </source>
</evidence>
<feature type="chain" id="PRO_1000130991" description="Putative pre-16S rRNA nuclease">
    <location>
        <begin position="1"/>
        <end position="141"/>
    </location>
</feature>
<organism>
    <name type="scientific">Aliivibrio salmonicida (strain LFI1238)</name>
    <name type="common">Vibrio salmonicida (strain LFI1238)</name>
    <dbReference type="NCBI Taxonomy" id="316275"/>
    <lineage>
        <taxon>Bacteria</taxon>
        <taxon>Pseudomonadati</taxon>
        <taxon>Pseudomonadota</taxon>
        <taxon>Gammaproteobacteria</taxon>
        <taxon>Vibrionales</taxon>
        <taxon>Vibrionaceae</taxon>
        <taxon>Aliivibrio</taxon>
    </lineage>
</organism>
<protein>
    <recommendedName>
        <fullName evidence="1">Putative pre-16S rRNA nuclease</fullName>
        <ecNumber evidence="1">3.1.-.-</ecNumber>
    </recommendedName>
</protein>
<keyword id="KW-0963">Cytoplasm</keyword>
<keyword id="KW-0378">Hydrolase</keyword>
<keyword id="KW-0540">Nuclease</keyword>
<keyword id="KW-0690">Ribosome biogenesis</keyword>
<accession>B6EMV2</accession>
<dbReference type="EC" id="3.1.-.-" evidence="1"/>
<dbReference type="EMBL" id="FM178379">
    <property type="protein sequence ID" value="CAQ78231.1"/>
    <property type="molecule type" value="Genomic_DNA"/>
</dbReference>
<dbReference type="SMR" id="B6EMV2"/>
<dbReference type="KEGG" id="vsa:VSAL_I0546"/>
<dbReference type="eggNOG" id="COG0816">
    <property type="taxonomic scope" value="Bacteria"/>
</dbReference>
<dbReference type="HOGENOM" id="CLU_098240_3_0_6"/>
<dbReference type="Proteomes" id="UP000001730">
    <property type="component" value="Chromosome 1"/>
</dbReference>
<dbReference type="GO" id="GO:0005829">
    <property type="term" value="C:cytosol"/>
    <property type="evidence" value="ECO:0007669"/>
    <property type="project" value="TreeGrafter"/>
</dbReference>
<dbReference type="GO" id="GO:0004518">
    <property type="term" value="F:nuclease activity"/>
    <property type="evidence" value="ECO:0007669"/>
    <property type="project" value="UniProtKB-KW"/>
</dbReference>
<dbReference type="GO" id="GO:0000967">
    <property type="term" value="P:rRNA 5'-end processing"/>
    <property type="evidence" value="ECO:0007669"/>
    <property type="project" value="UniProtKB-UniRule"/>
</dbReference>
<dbReference type="CDD" id="cd16964">
    <property type="entry name" value="YqgF"/>
    <property type="match status" value="1"/>
</dbReference>
<dbReference type="FunFam" id="3.30.420.140:FF:000002">
    <property type="entry name" value="Putative pre-16S rRNA nuclease"/>
    <property type="match status" value="1"/>
</dbReference>
<dbReference type="Gene3D" id="3.30.420.140">
    <property type="entry name" value="YqgF/RNase H-like domain"/>
    <property type="match status" value="1"/>
</dbReference>
<dbReference type="HAMAP" id="MF_00651">
    <property type="entry name" value="Nuclease_YqgF"/>
    <property type="match status" value="1"/>
</dbReference>
<dbReference type="InterPro" id="IPR012337">
    <property type="entry name" value="RNaseH-like_sf"/>
</dbReference>
<dbReference type="InterPro" id="IPR005227">
    <property type="entry name" value="YqgF"/>
</dbReference>
<dbReference type="InterPro" id="IPR006641">
    <property type="entry name" value="YqgF/RNaseH-like_dom"/>
</dbReference>
<dbReference type="InterPro" id="IPR037027">
    <property type="entry name" value="YqgF/RNaseH-like_dom_sf"/>
</dbReference>
<dbReference type="NCBIfam" id="TIGR00250">
    <property type="entry name" value="RNAse_H_YqgF"/>
    <property type="match status" value="1"/>
</dbReference>
<dbReference type="PANTHER" id="PTHR33317">
    <property type="entry name" value="POLYNUCLEOTIDYL TRANSFERASE, RIBONUCLEASE H-LIKE SUPERFAMILY PROTEIN"/>
    <property type="match status" value="1"/>
</dbReference>
<dbReference type="PANTHER" id="PTHR33317:SF4">
    <property type="entry name" value="POLYNUCLEOTIDYL TRANSFERASE, RIBONUCLEASE H-LIKE SUPERFAMILY PROTEIN"/>
    <property type="match status" value="1"/>
</dbReference>
<dbReference type="Pfam" id="PF03652">
    <property type="entry name" value="RuvX"/>
    <property type="match status" value="1"/>
</dbReference>
<dbReference type="SMART" id="SM00732">
    <property type="entry name" value="YqgFc"/>
    <property type="match status" value="1"/>
</dbReference>
<dbReference type="SUPFAM" id="SSF53098">
    <property type="entry name" value="Ribonuclease H-like"/>
    <property type="match status" value="1"/>
</dbReference>